<accession>Q9HJM1</accession>
<name>SYD_THEAC</name>
<organism>
    <name type="scientific">Thermoplasma acidophilum (strain ATCC 25905 / DSM 1728 / JCM 9062 / NBRC 15155 / AMRC-C165)</name>
    <dbReference type="NCBI Taxonomy" id="273075"/>
    <lineage>
        <taxon>Archaea</taxon>
        <taxon>Methanobacteriati</taxon>
        <taxon>Thermoplasmatota</taxon>
        <taxon>Thermoplasmata</taxon>
        <taxon>Thermoplasmatales</taxon>
        <taxon>Thermoplasmataceae</taxon>
        <taxon>Thermoplasma</taxon>
    </lineage>
</organism>
<protein>
    <recommendedName>
        <fullName evidence="1">Aspartate--tRNA(Asp) ligase</fullName>
        <ecNumber evidence="1">6.1.1.12</ecNumber>
    </recommendedName>
    <alternativeName>
        <fullName evidence="1">Aspartyl-tRNA synthetase</fullName>
        <shortName evidence="1">AspRS</shortName>
    </alternativeName>
    <alternativeName>
        <fullName evidence="1">Discriminating aspartyl-tRNA synthetase</fullName>
        <shortName evidence="1">D-AspRS</shortName>
    </alternativeName>
</protein>
<keyword id="KW-0030">Aminoacyl-tRNA synthetase</keyword>
<keyword id="KW-0067">ATP-binding</keyword>
<keyword id="KW-0963">Cytoplasm</keyword>
<keyword id="KW-0436">Ligase</keyword>
<keyword id="KW-0460">Magnesium</keyword>
<keyword id="KW-0479">Metal-binding</keyword>
<keyword id="KW-0547">Nucleotide-binding</keyword>
<keyword id="KW-0648">Protein biosynthesis</keyword>
<keyword id="KW-1185">Reference proteome</keyword>
<sequence>MPRTYIDTLRDHEDGAKVVVYGWMQEARIMKNISFLMIRDNTGTIQATFKNDEATLDIIKRINRESIVRVDGSVNKKSISKAGIEISGTSISIVNEAEAPLPLPVVDPVQADLETRLNSRFMDLRKRNISAIFRIESALLWGIRQYLHSQKFIEVHTPKIVAAATEGGSDLFPVRYFEKDAYLNQSPQLYKEVLMSAGFDRVFEVGPAFRAEEHNTTRHLNEFTSIDIEMSFADHNDAMAMLENAIRSGIENAVRENAEDFESLGISISVPETPFPRITYEQCIDLLQKDGIDFTFGDDFSPDQLRTIGSRFSGFYFITEWPSSVRPFYTMPKSEDPRLTNSFDLQYREIEVTSGAQRVHDPKMLIQRFNEKKLDVKSFQFYVDAFKYGMPPHAGWGLGLERLTMILLGLNNIRETTLFPRDRTRIVP</sequence>
<comment type="function">
    <text evidence="1">Catalyzes the attachment of L-aspartate to tRNA(Asp) in a two-step reaction: L-aspartate is first activated by ATP to form Asp-AMP and then transferred to the acceptor end of tRNA(Asp).</text>
</comment>
<comment type="catalytic activity">
    <reaction evidence="1">
        <text>tRNA(Asp) + L-aspartate + ATP = L-aspartyl-tRNA(Asp) + AMP + diphosphate</text>
        <dbReference type="Rhea" id="RHEA:19649"/>
        <dbReference type="Rhea" id="RHEA-COMP:9660"/>
        <dbReference type="Rhea" id="RHEA-COMP:9678"/>
        <dbReference type="ChEBI" id="CHEBI:29991"/>
        <dbReference type="ChEBI" id="CHEBI:30616"/>
        <dbReference type="ChEBI" id="CHEBI:33019"/>
        <dbReference type="ChEBI" id="CHEBI:78442"/>
        <dbReference type="ChEBI" id="CHEBI:78516"/>
        <dbReference type="ChEBI" id="CHEBI:456215"/>
        <dbReference type="EC" id="6.1.1.12"/>
    </reaction>
</comment>
<comment type="cofactor">
    <cofactor evidence="1">
        <name>Mg(2+)</name>
        <dbReference type="ChEBI" id="CHEBI:18420"/>
    </cofactor>
    <text evidence="1">Binds 3 Mg(2+) cations per subunit. The strongest magnesium site (Mg1) is bound to the beta- and gamma-phosphates of ATP and four water molecules complete its coordination sphere.</text>
</comment>
<comment type="subunit">
    <text evidence="1">Homodimer.</text>
</comment>
<comment type="subcellular location">
    <subcellularLocation>
        <location evidence="1">Cytoplasm</location>
    </subcellularLocation>
</comment>
<comment type="similarity">
    <text evidence="1">Belongs to the class-II aminoacyl-tRNA synthetase family. Type 2 subfamily.</text>
</comment>
<dbReference type="EC" id="6.1.1.12" evidence="1"/>
<dbReference type="EMBL" id="AL445066">
    <property type="protein sequence ID" value="CAC12075.1"/>
    <property type="molecule type" value="Genomic_DNA"/>
</dbReference>
<dbReference type="RefSeq" id="WP_010901356.1">
    <property type="nucleotide sequence ID" value="NC_002578.1"/>
</dbReference>
<dbReference type="SMR" id="Q9HJM1"/>
<dbReference type="FunCoup" id="Q9HJM1">
    <property type="interactions" value="248"/>
</dbReference>
<dbReference type="STRING" id="273075.gene:9572164"/>
<dbReference type="PaxDb" id="273075-Ta0946"/>
<dbReference type="EnsemblBacteria" id="CAC12075">
    <property type="protein sequence ID" value="CAC12075"/>
    <property type="gene ID" value="CAC12075"/>
</dbReference>
<dbReference type="KEGG" id="tac:Ta0946"/>
<dbReference type="eggNOG" id="arCOG00406">
    <property type="taxonomic scope" value="Archaea"/>
</dbReference>
<dbReference type="HOGENOM" id="CLU_004553_2_1_2"/>
<dbReference type="InParanoid" id="Q9HJM1"/>
<dbReference type="OrthoDB" id="5908at2157"/>
<dbReference type="Proteomes" id="UP000001024">
    <property type="component" value="Chromosome"/>
</dbReference>
<dbReference type="GO" id="GO:0017101">
    <property type="term" value="C:aminoacyl-tRNA synthetase multienzyme complex"/>
    <property type="evidence" value="ECO:0007669"/>
    <property type="project" value="TreeGrafter"/>
</dbReference>
<dbReference type="GO" id="GO:0005829">
    <property type="term" value="C:cytosol"/>
    <property type="evidence" value="ECO:0007669"/>
    <property type="project" value="TreeGrafter"/>
</dbReference>
<dbReference type="GO" id="GO:0004815">
    <property type="term" value="F:aspartate-tRNA ligase activity"/>
    <property type="evidence" value="ECO:0007669"/>
    <property type="project" value="UniProtKB-UniRule"/>
</dbReference>
<dbReference type="GO" id="GO:0005524">
    <property type="term" value="F:ATP binding"/>
    <property type="evidence" value="ECO:0007669"/>
    <property type="project" value="UniProtKB-UniRule"/>
</dbReference>
<dbReference type="GO" id="GO:0000287">
    <property type="term" value="F:magnesium ion binding"/>
    <property type="evidence" value="ECO:0007669"/>
    <property type="project" value="UniProtKB-UniRule"/>
</dbReference>
<dbReference type="GO" id="GO:0003723">
    <property type="term" value="F:RNA binding"/>
    <property type="evidence" value="ECO:0007669"/>
    <property type="project" value="TreeGrafter"/>
</dbReference>
<dbReference type="GO" id="GO:0006422">
    <property type="term" value="P:aspartyl-tRNA aminoacylation"/>
    <property type="evidence" value="ECO:0007669"/>
    <property type="project" value="UniProtKB-UniRule"/>
</dbReference>
<dbReference type="CDD" id="cd00776">
    <property type="entry name" value="AsxRS_core"/>
    <property type="match status" value="1"/>
</dbReference>
<dbReference type="FunFam" id="3.30.930.10:FF:000038">
    <property type="entry name" value="Aspartate--tRNA ligase"/>
    <property type="match status" value="1"/>
</dbReference>
<dbReference type="Gene3D" id="3.30.930.10">
    <property type="entry name" value="Bira Bifunctional Protein, Domain 2"/>
    <property type="match status" value="1"/>
</dbReference>
<dbReference type="Gene3D" id="2.40.50.140">
    <property type="entry name" value="Nucleic acid-binding proteins"/>
    <property type="match status" value="1"/>
</dbReference>
<dbReference type="HAMAP" id="MF_02075">
    <property type="entry name" value="Asp_tRNA_synth_type2"/>
    <property type="match status" value="1"/>
</dbReference>
<dbReference type="InterPro" id="IPR004364">
    <property type="entry name" value="Aa-tRNA-synt_II"/>
</dbReference>
<dbReference type="InterPro" id="IPR006195">
    <property type="entry name" value="aa-tRNA-synth_II"/>
</dbReference>
<dbReference type="InterPro" id="IPR045864">
    <property type="entry name" value="aa-tRNA-synth_II/BPL/LPL"/>
</dbReference>
<dbReference type="InterPro" id="IPR004523">
    <property type="entry name" value="Asp-tRNA_synthase_2"/>
</dbReference>
<dbReference type="InterPro" id="IPR002312">
    <property type="entry name" value="Asp/Asn-tRNA-synth_IIb"/>
</dbReference>
<dbReference type="InterPro" id="IPR012340">
    <property type="entry name" value="NA-bd_OB-fold"/>
</dbReference>
<dbReference type="InterPro" id="IPR004365">
    <property type="entry name" value="NA-bd_OB_tRNA"/>
</dbReference>
<dbReference type="NCBIfam" id="TIGR00458">
    <property type="entry name" value="aspS_nondisc"/>
    <property type="match status" value="1"/>
</dbReference>
<dbReference type="NCBIfam" id="NF003483">
    <property type="entry name" value="PRK05159.1"/>
    <property type="match status" value="1"/>
</dbReference>
<dbReference type="PANTHER" id="PTHR43450:SF1">
    <property type="entry name" value="ASPARTATE--TRNA LIGASE, CYTOPLASMIC"/>
    <property type="match status" value="1"/>
</dbReference>
<dbReference type="PANTHER" id="PTHR43450">
    <property type="entry name" value="ASPARTYL-TRNA SYNTHETASE"/>
    <property type="match status" value="1"/>
</dbReference>
<dbReference type="Pfam" id="PF00152">
    <property type="entry name" value="tRNA-synt_2"/>
    <property type="match status" value="1"/>
</dbReference>
<dbReference type="Pfam" id="PF01336">
    <property type="entry name" value="tRNA_anti-codon"/>
    <property type="match status" value="1"/>
</dbReference>
<dbReference type="PRINTS" id="PR01042">
    <property type="entry name" value="TRNASYNTHASP"/>
</dbReference>
<dbReference type="SUPFAM" id="SSF55681">
    <property type="entry name" value="Class II aaRS and biotin synthetases"/>
    <property type="match status" value="1"/>
</dbReference>
<dbReference type="SUPFAM" id="SSF50249">
    <property type="entry name" value="Nucleic acid-binding proteins"/>
    <property type="match status" value="1"/>
</dbReference>
<dbReference type="PROSITE" id="PS50862">
    <property type="entry name" value="AA_TRNA_LIGASE_II"/>
    <property type="match status" value="1"/>
</dbReference>
<proteinExistence type="inferred from homology"/>
<reference key="1">
    <citation type="journal article" date="2000" name="Nature">
        <title>The genome sequence of the thermoacidophilic scavenger Thermoplasma acidophilum.</title>
        <authorList>
            <person name="Ruepp A."/>
            <person name="Graml W."/>
            <person name="Santos-Martinez M.-L."/>
            <person name="Koretke K.K."/>
            <person name="Volker C."/>
            <person name="Mewes H.-W."/>
            <person name="Frishman D."/>
            <person name="Stocker S."/>
            <person name="Lupas A.N."/>
            <person name="Baumeister W."/>
        </authorList>
    </citation>
    <scope>NUCLEOTIDE SEQUENCE [LARGE SCALE GENOMIC DNA]</scope>
    <source>
        <strain>ATCC 25905 / DSM 1728 / JCM 9062 / NBRC 15155 / AMRC-C165</strain>
    </source>
</reference>
<feature type="chain" id="PRO_0000111008" description="Aspartate--tRNA(Asp) ligase">
    <location>
        <begin position="1"/>
        <end position="428"/>
    </location>
</feature>
<feature type="region of interest" description="Aspartate" evidence="1">
    <location>
        <begin position="188"/>
        <end position="191"/>
    </location>
</feature>
<feature type="binding site" evidence="1">
    <location>
        <position position="166"/>
    </location>
    <ligand>
        <name>L-aspartate</name>
        <dbReference type="ChEBI" id="CHEBI:29991"/>
    </ligand>
</feature>
<feature type="binding site" evidence="1">
    <location>
        <begin position="210"/>
        <end position="212"/>
    </location>
    <ligand>
        <name>ATP</name>
        <dbReference type="ChEBI" id="CHEBI:30616"/>
    </ligand>
</feature>
<feature type="binding site" evidence="1">
    <location>
        <position position="210"/>
    </location>
    <ligand>
        <name>L-aspartate</name>
        <dbReference type="ChEBI" id="CHEBI:29991"/>
    </ligand>
</feature>
<feature type="binding site" evidence="1">
    <location>
        <begin position="218"/>
        <end position="220"/>
    </location>
    <ligand>
        <name>ATP</name>
        <dbReference type="ChEBI" id="CHEBI:30616"/>
    </ligand>
</feature>
<feature type="binding site" evidence="1">
    <location>
        <position position="351"/>
    </location>
    <ligand>
        <name>ATP</name>
        <dbReference type="ChEBI" id="CHEBI:30616"/>
    </ligand>
</feature>
<feature type="binding site" evidence="1">
    <location>
        <position position="351"/>
    </location>
    <ligand>
        <name>Mg(2+)</name>
        <dbReference type="ChEBI" id="CHEBI:18420"/>
        <label>2</label>
    </ligand>
</feature>
<feature type="binding site" evidence="1">
    <location>
        <position position="351"/>
    </location>
    <ligand>
        <name>Mg(2+)</name>
        <dbReference type="ChEBI" id="CHEBI:18420"/>
        <label>3</label>
    </ligand>
</feature>
<feature type="binding site" evidence="1">
    <location>
        <position position="354"/>
    </location>
    <ligand>
        <name>L-aspartate</name>
        <dbReference type="ChEBI" id="CHEBI:29991"/>
    </ligand>
</feature>
<feature type="binding site" evidence="1">
    <location>
        <position position="354"/>
    </location>
    <ligand>
        <name>Mg(2+)</name>
        <dbReference type="ChEBI" id="CHEBI:18420"/>
        <label>2</label>
    </ligand>
</feature>
<feature type="binding site" evidence="1">
    <location>
        <position position="358"/>
    </location>
    <ligand>
        <name>L-aspartate</name>
        <dbReference type="ChEBI" id="CHEBI:29991"/>
    </ligand>
</feature>
<feature type="binding site" evidence="1">
    <location>
        <begin position="399"/>
        <end position="402"/>
    </location>
    <ligand>
        <name>ATP</name>
        <dbReference type="ChEBI" id="CHEBI:30616"/>
    </ligand>
</feature>
<feature type="site" description="Important for tRNA discrimination" evidence="1">
    <location>
        <position position="81"/>
    </location>
</feature>
<evidence type="ECO:0000255" key="1">
    <source>
        <dbReference type="HAMAP-Rule" id="MF_02075"/>
    </source>
</evidence>
<gene>
    <name evidence="1" type="primary">aspS</name>
    <name type="ordered locus">Ta0946</name>
</gene>